<sequence length="805" mass="92875">MSFNHREIEQKWQDYWEKNKTFRTPDDDDKPKFYVLDMFPYPSGAGLHVGHPEGYTATDILARMKRMQGYNVLHPMGWDAFGLPAEQYALDTGNDPAEFTQKNIDNFRRQIKSLGFSYDWDREINTTDPNYYKWTQWIFLKLYEKGLAYMDEVPVNWCPALGTVLANEEVINGRSERGGHPVIRKPMRQWMLKITAYADRLLEDLEELDWPESIKEMQRNWIGRSEGAEIEFAVHGHDETFTVFTTRPDTLFGATYTVLAPEHPLVEKITTPEQKPAVDAYLKEIQSKSDLERTDLAKEKTGVFTGAYAIHPVTGDRLPIWIADYVLMSYGTGAIMAVPAHDERDYEFAKKFHLPMKEVVAGGDIEKEPYTGDGEHINSEFLNGLNKQEAIDKMIAWLEEHGKGRKKVSYRLRDWLFSRQRYWGEPIPIIHWEDGTMTPVPEEELPLVLPKTDEIRPSGTGESPLANIEEWVNVVDPKTGKKGRRETNTMPQWAGSCWYYLRYIDPHNDKQLADPEKLKKWLPVDVYIGGAEHAVLHLLYARFWHKFLYDLGIVPTKEPFQKLFNQGMILGENNEKMSKSKGNVVNPDDIIESHGADTLRLYEMFMGPLEASIAWSTKGLDGARRFLDRVWRLFVTENGELNPNIVDEPANDTLERIYHQTVKKVTEDYESLRFNTAISQLMVFINEAYKAEQMKKEYMEGFVKLLSPVCPHIGEELWQKLGHTDTIAYEPWPTYDETKLVEDVVEIVVQINGKVRSRLHVPVDLPKEALEERALADEKIKEQLEGKTVRKVIAVPGKLVNIVAN</sequence>
<reference key="1">
    <citation type="journal article" date="2004" name="Nucleic Acids Res.">
        <title>Thermoadaptation trait revealed by the genome sequence of thermophilic Geobacillus kaustophilus.</title>
        <authorList>
            <person name="Takami H."/>
            <person name="Takaki Y."/>
            <person name="Chee G.-J."/>
            <person name="Nishi S."/>
            <person name="Shimamura S."/>
            <person name="Suzuki H."/>
            <person name="Matsui S."/>
            <person name="Uchiyama I."/>
        </authorList>
    </citation>
    <scope>NUCLEOTIDE SEQUENCE [LARGE SCALE GENOMIC DNA]</scope>
    <source>
        <strain>HTA426</strain>
    </source>
</reference>
<organism>
    <name type="scientific">Geobacillus kaustophilus (strain HTA426)</name>
    <dbReference type="NCBI Taxonomy" id="235909"/>
    <lineage>
        <taxon>Bacteria</taxon>
        <taxon>Bacillati</taxon>
        <taxon>Bacillota</taxon>
        <taxon>Bacilli</taxon>
        <taxon>Bacillales</taxon>
        <taxon>Anoxybacillaceae</taxon>
        <taxon>Geobacillus</taxon>
        <taxon>Geobacillus thermoleovorans group</taxon>
    </lineage>
</organism>
<name>SYL_GEOKA</name>
<protein>
    <recommendedName>
        <fullName evidence="1">Leucine--tRNA ligase</fullName>
        <ecNumber evidence="1">6.1.1.4</ecNumber>
    </recommendedName>
    <alternativeName>
        <fullName evidence="1">Leucyl-tRNA synthetase</fullName>
        <shortName evidence="1">LeuRS</shortName>
    </alternativeName>
</protein>
<keyword id="KW-0030">Aminoacyl-tRNA synthetase</keyword>
<keyword id="KW-0067">ATP-binding</keyword>
<keyword id="KW-0963">Cytoplasm</keyword>
<keyword id="KW-0436">Ligase</keyword>
<keyword id="KW-0547">Nucleotide-binding</keyword>
<keyword id="KW-0648">Protein biosynthesis</keyword>
<keyword id="KW-1185">Reference proteome</keyword>
<proteinExistence type="inferred from homology"/>
<dbReference type="EC" id="6.1.1.4" evidence="1"/>
<dbReference type="EMBL" id="BA000043">
    <property type="protein sequence ID" value="BAD77127.1"/>
    <property type="molecule type" value="Genomic_DNA"/>
</dbReference>
<dbReference type="RefSeq" id="WP_011232314.1">
    <property type="nucleotide sequence ID" value="NC_006510.1"/>
</dbReference>
<dbReference type="SMR" id="Q5KW09"/>
<dbReference type="STRING" id="235909.GK2842"/>
<dbReference type="KEGG" id="gka:GK2842"/>
<dbReference type="eggNOG" id="COG0495">
    <property type="taxonomic scope" value="Bacteria"/>
</dbReference>
<dbReference type="HOGENOM" id="CLU_004427_0_0_9"/>
<dbReference type="Proteomes" id="UP000001172">
    <property type="component" value="Chromosome"/>
</dbReference>
<dbReference type="GO" id="GO:0005829">
    <property type="term" value="C:cytosol"/>
    <property type="evidence" value="ECO:0007669"/>
    <property type="project" value="TreeGrafter"/>
</dbReference>
<dbReference type="GO" id="GO:0002161">
    <property type="term" value="F:aminoacyl-tRNA deacylase activity"/>
    <property type="evidence" value="ECO:0007669"/>
    <property type="project" value="InterPro"/>
</dbReference>
<dbReference type="GO" id="GO:0005524">
    <property type="term" value="F:ATP binding"/>
    <property type="evidence" value="ECO:0007669"/>
    <property type="project" value="UniProtKB-UniRule"/>
</dbReference>
<dbReference type="GO" id="GO:0004823">
    <property type="term" value="F:leucine-tRNA ligase activity"/>
    <property type="evidence" value="ECO:0007669"/>
    <property type="project" value="UniProtKB-UniRule"/>
</dbReference>
<dbReference type="GO" id="GO:0006429">
    <property type="term" value="P:leucyl-tRNA aminoacylation"/>
    <property type="evidence" value="ECO:0007669"/>
    <property type="project" value="UniProtKB-UniRule"/>
</dbReference>
<dbReference type="CDD" id="cd07958">
    <property type="entry name" value="Anticodon_Ia_Leu_BEm"/>
    <property type="match status" value="1"/>
</dbReference>
<dbReference type="CDD" id="cd00812">
    <property type="entry name" value="LeuRS_core"/>
    <property type="match status" value="1"/>
</dbReference>
<dbReference type="FunFam" id="1.10.730.10:FF:000012">
    <property type="entry name" value="Leucine--tRNA ligase"/>
    <property type="match status" value="1"/>
</dbReference>
<dbReference type="FunFam" id="3.10.20.590:FF:000001">
    <property type="entry name" value="Leucine--tRNA ligase"/>
    <property type="match status" value="1"/>
</dbReference>
<dbReference type="FunFam" id="3.40.50.620:FF:000056">
    <property type="entry name" value="Leucine--tRNA ligase"/>
    <property type="match status" value="1"/>
</dbReference>
<dbReference type="FunFam" id="3.40.50.620:FF:000077">
    <property type="entry name" value="Leucine--tRNA ligase"/>
    <property type="match status" value="1"/>
</dbReference>
<dbReference type="FunFam" id="1.10.730.10:FF:000011">
    <property type="entry name" value="Leucine--tRNA ligase chloroplastic/mitochondrial"/>
    <property type="match status" value="1"/>
</dbReference>
<dbReference type="Gene3D" id="3.10.20.590">
    <property type="match status" value="1"/>
</dbReference>
<dbReference type="Gene3D" id="3.40.50.620">
    <property type="entry name" value="HUPs"/>
    <property type="match status" value="2"/>
</dbReference>
<dbReference type="Gene3D" id="1.10.730.10">
    <property type="entry name" value="Isoleucyl-tRNA Synthetase, Domain 1"/>
    <property type="match status" value="1"/>
</dbReference>
<dbReference type="HAMAP" id="MF_00049_B">
    <property type="entry name" value="Leu_tRNA_synth_B"/>
    <property type="match status" value="1"/>
</dbReference>
<dbReference type="InterPro" id="IPR001412">
    <property type="entry name" value="aa-tRNA-synth_I_CS"/>
</dbReference>
<dbReference type="InterPro" id="IPR002300">
    <property type="entry name" value="aa-tRNA-synth_Ia"/>
</dbReference>
<dbReference type="InterPro" id="IPR002302">
    <property type="entry name" value="Leu-tRNA-ligase"/>
</dbReference>
<dbReference type="InterPro" id="IPR025709">
    <property type="entry name" value="Leu_tRNA-synth_edit"/>
</dbReference>
<dbReference type="InterPro" id="IPR013155">
    <property type="entry name" value="M/V/L/I-tRNA-synth_anticd-bd"/>
</dbReference>
<dbReference type="InterPro" id="IPR015413">
    <property type="entry name" value="Methionyl/Leucyl_tRNA_Synth"/>
</dbReference>
<dbReference type="InterPro" id="IPR014729">
    <property type="entry name" value="Rossmann-like_a/b/a_fold"/>
</dbReference>
<dbReference type="InterPro" id="IPR009080">
    <property type="entry name" value="tRNAsynth_Ia_anticodon-bd"/>
</dbReference>
<dbReference type="InterPro" id="IPR009008">
    <property type="entry name" value="Val/Leu/Ile-tRNA-synth_edit"/>
</dbReference>
<dbReference type="NCBIfam" id="TIGR00396">
    <property type="entry name" value="leuS_bact"/>
    <property type="match status" value="1"/>
</dbReference>
<dbReference type="PANTHER" id="PTHR43740:SF2">
    <property type="entry name" value="LEUCINE--TRNA LIGASE, MITOCHONDRIAL"/>
    <property type="match status" value="1"/>
</dbReference>
<dbReference type="PANTHER" id="PTHR43740">
    <property type="entry name" value="LEUCYL-TRNA SYNTHETASE"/>
    <property type="match status" value="1"/>
</dbReference>
<dbReference type="Pfam" id="PF08264">
    <property type="entry name" value="Anticodon_1"/>
    <property type="match status" value="1"/>
</dbReference>
<dbReference type="Pfam" id="PF00133">
    <property type="entry name" value="tRNA-synt_1"/>
    <property type="match status" value="1"/>
</dbReference>
<dbReference type="Pfam" id="PF13603">
    <property type="entry name" value="tRNA-synt_1_2"/>
    <property type="match status" value="1"/>
</dbReference>
<dbReference type="Pfam" id="PF09334">
    <property type="entry name" value="tRNA-synt_1g"/>
    <property type="match status" value="1"/>
</dbReference>
<dbReference type="PRINTS" id="PR00985">
    <property type="entry name" value="TRNASYNTHLEU"/>
</dbReference>
<dbReference type="SUPFAM" id="SSF47323">
    <property type="entry name" value="Anticodon-binding domain of a subclass of class I aminoacyl-tRNA synthetases"/>
    <property type="match status" value="1"/>
</dbReference>
<dbReference type="SUPFAM" id="SSF52374">
    <property type="entry name" value="Nucleotidylyl transferase"/>
    <property type="match status" value="1"/>
</dbReference>
<dbReference type="SUPFAM" id="SSF50677">
    <property type="entry name" value="ValRS/IleRS/LeuRS editing domain"/>
    <property type="match status" value="1"/>
</dbReference>
<dbReference type="PROSITE" id="PS00178">
    <property type="entry name" value="AA_TRNA_LIGASE_I"/>
    <property type="match status" value="1"/>
</dbReference>
<accession>Q5KW09</accession>
<comment type="catalytic activity">
    <reaction evidence="1">
        <text>tRNA(Leu) + L-leucine + ATP = L-leucyl-tRNA(Leu) + AMP + diphosphate</text>
        <dbReference type="Rhea" id="RHEA:11688"/>
        <dbReference type="Rhea" id="RHEA-COMP:9613"/>
        <dbReference type="Rhea" id="RHEA-COMP:9622"/>
        <dbReference type="ChEBI" id="CHEBI:30616"/>
        <dbReference type="ChEBI" id="CHEBI:33019"/>
        <dbReference type="ChEBI" id="CHEBI:57427"/>
        <dbReference type="ChEBI" id="CHEBI:78442"/>
        <dbReference type="ChEBI" id="CHEBI:78494"/>
        <dbReference type="ChEBI" id="CHEBI:456215"/>
        <dbReference type="EC" id="6.1.1.4"/>
    </reaction>
</comment>
<comment type="subcellular location">
    <subcellularLocation>
        <location evidence="1">Cytoplasm</location>
    </subcellularLocation>
</comment>
<comment type="similarity">
    <text evidence="1">Belongs to the class-I aminoacyl-tRNA synthetase family.</text>
</comment>
<evidence type="ECO:0000255" key="1">
    <source>
        <dbReference type="HAMAP-Rule" id="MF_00049"/>
    </source>
</evidence>
<gene>
    <name evidence="1" type="primary">leuS</name>
    <name type="ordered locus">GK2842</name>
</gene>
<feature type="chain" id="PRO_0000152019" description="Leucine--tRNA ligase">
    <location>
        <begin position="1"/>
        <end position="805"/>
    </location>
</feature>
<feature type="short sequence motif" description="'HIGH' region">
    <location>
        <begin position="40"/>
        <end position="51"/>
    </location>
</feature>
<feature type="short sequence motif" description="'KMSKS' region">
    <location>
        <begin position="576"/>
        <end position="580"/>
    </location>
</feature>
<feature type="binding site" evidence="1">
    <location>
        <position position="579"/>
    </location>
    <ligand>
        <name>ATP</name>
        <dbReference type="ChEBI" id="CHEBI:30616"/>
    </ligand>
</feature>